<dbReference type="EC" id="2.7.9.3" evidence="2 4 5"/>
<dbReference type="EMBL" id="M30184">
    <property type="protein sequence ID" value="AAA74748.1"/>
    <property type="molecule type" value="Genomic_DNA"/>
</dbReference>
<dbReference type="EMBL" id="U00096">
    <property type="protein sequence ID" value="AAC74834.1"/>
    <property type="molecule type" value="Genomic_DNA"/>
</dbReference>
<dbReference type="EMBL" id="AP009048">
    <property type="protein sequence ID" value="BAA15552.2"/>
    <property type="molecule type" value="Genomic_DNA"/>
</dbReference>
<dbReference type="EMBL" id="J05076">
    <property type="protein sequence ID" value="AAA83922.1"/>
    <property type="molecule type" value="Genomic_DNA"/>
</dbReference>
<dbReference type="PIR" id="JW0033">
    <property type="entry name" value="JW0033"/>
</dbReference>
<dbReference type="RefSeq" id="NP_416278.1">
    <property type="nucleotide sequence ID" value="NC_000913.3"/>
</dbReference>
<dbReference type="RefSeq" id="WP_001295485.1">
    <property type="nucleotide sequence ID" value="NZ_SSZK01000001.1"/>
</dbReference>
<dbReference type="PDB" id="3U0O">
    <property type="method" value="X-ray"/>
    <property type="resolution" value="2.25 A"/>
    <property type="chains" value="A/B=1-347"/>
</dbReference>
<dbReference type="PDBsum" id="3U0O"/>
<dbReference type="SMR" id="P16456"/>
<dbReference type="BioGRID" id="4259138">
    <property type="interactions" value="36"/>
</dbReference>
<dbReference type="DIP" id="DIP-10849N"/>
<dbReference type="FunCoup" id="P16456">
    <property type="interactions" value="466"/>
</dbReference>
<dbReference type="IntAct" id="P16456">
    <property type="interactions" value="11"/>
</dbReference>
<dbReference type="STRING" id="511145.b1764"/>
<dbReference type="jPOST" id="P16456"/>
<dbReference type="PaxDb" id="511145-b1764"/>
<dbReference type="DNASU" id="946768"/>
<dbReference type="EnsemblBacteria" id="AAC74834">
    <property type="protein sequence ID" value="AAC74834"/>
    <property type="gene ID" value="b1764"/>
</dbReference>
<dbReference type="GeneID" id="75057654"/>
<dbReference type="GeneID" id="946768"/>
<dbReference type="KEGG" id="ecj:JW1753"/>
<dbReference type="KEGG" id="eco:b1764"/>
<dbReference type="KEGG" id="ecoc:C3026_10065"/>
<dbReference type="PATRIC" id="fig|1411691.4.peg.490"/>
<dbReference type="EchoBASE" id="EB0936"/>
<dbReference type="eggNOG" id="COG0709">
    <property type="taxonomic scope" value="Bacteria"/>
</dbReference>
<dbReference type="InParanoid" id="P16456"/>
<dbReference type="OMA" id="LARDWMC"/>
<dbReference type="OrthoDB" id="9767928at2"/>
<dbReference type="PhylomeDB" id="P16456"/>
<dbReference type="BioCyc" id="EcoCyc:EG10943-MONOMER"/>
<dbReference type="BioCyc" id="MetaCyc:EG10943-MONOMER"/>
<dbReference type="BRENDA" id="2.7.9.3">
    <property type="organism ID" value="2026"/>
</dbReference>
<dbReference type="EvolutionaryTrace" id="P16456"/>
<dbReference type="PRO" id="PR:P16456"/>
<dbReference type="Proteomes" id="UP000000625">
    <property type="component" value="Chromosome"/>
</dbReference>
<dbReference type="GO" id="GO:0005737">
    <property type="term" value="C:cytoplasm"/>
    <property type="evidence" value="ECO:0000318"/>
    <property type="project" value="GO_Central"/>
</dbReference>
<dbReference type="GO" id="GO:0005829">
    <property type="term" value="C:cytosol"/>
    <property type="evidence" value="ECO:0000314"/>
    <property type="project" value="EcoCyc"/>
</dbReference>
<dbReference type="GO" id="GO:0005524">
    <property type="term" value="F:ATP binding"/>
    <property type="evidence" value="ECO:0007669"/>
    <property type="project" value="UniProtKB-UniRule"/>
</dbReference>
<dbReference type="GO" id="GO:0042802">
    <property type="term" value="F:identical protein binding"/>
    <property type="evidence" value="ECO:0000353"/>
    <property type="project" value="UniProtKB"/>
</dbReference>
<dbReference type="GO" id="GO:0000287">
    <property type="term" value="F:magnesium ion binding"/>
    <property type="evidence" value="ECO:0000314"/>
    <property type="project" value="EcoCyc"/>
</dbReference>
<dbReference type="GO" id="GO:0042803">
    <property type="term" value="F:protein homodimerization activity"/>
    <property type="evidence" value="ECO:0000314"/>
    <property type="project" value="EcoCyc"/>
</dbReference>
<dbReference type="GO" id="GO:0004756">
    <property type="term" value="F:selenide, water dikinase activity"/>
    <property type="evidence" value="ECO:0000314"/>
    <property type="project" value="UniProtKB"/>
</dbReference>
<dbReference type="GO" id="GO:0016260">
    <property type="term" value="P:selenocysteine biosynthetic process"/>
    <property type="evidence" value="ECO:0000314"/>
    <property type="project" value="UniProtKB"/>
</dbReference>
<dbReference type="GO" id="GO:0070329">
    <property type="term" value="P:tRNA seleno-modification"/>
    <property type="evidence" value="ECO:0000315"/>
    <property type="project" value="EcoCyc"/>
</dbReference>
<dbReference type="CDD" id="cd02195">
    <property type="entry name" value="SelD"/>
    <property type="match status" value="1"/>
</dbReference>
<dbReference type="FunFam" id="3.30.1330.10:FF:000003">
    <property type="entry name" value="Selenide, water dikinase"/>
    <property type="match status" value="1"/>
</dbReference>
<dbReference type="FunFam" id="3.90.650.10:FF:000004">
    <property type="entry name" value="Selenide, water dikinase"/>
    <property type="match status" value="1"/>
</dbReference>
<dbReference type="Gene3D" id="3.90.650.10">
    <property type="entry name" value="PurM-like C-terminal domain"/>
    <property type="match status" value="1"/>
</dbReference>
<dbReference type="Gene3D" id="3.30.1330.10">
    <property type="entry name" value="PurM-like, N-terminal domain"/>
    <property type="match status" value="1"/>
</dbReference>
<dbReference type="HAMAP" id="MF_00625">
    <property type="entry name" value="SelD"/>
    <property type="match status" value="1"/>
</dbReference>
<dbReference type="InterPro" id="IPR010918">
    <property type="entry name" value="PurM-like_C_dom"/>
</dbReference>
<dbReference type="InterPro" id="IPR036676">
    <property type="entry name" value="PurM-like_C_sf"/>
</dbReference>
<dbReference type="InterPro" id="IPR016188">
    <property type="entry name" value="PurM-like_N"/>
</dbReference>
<dbReference type="InterPro" id="IPR036921">
    <property type="entry name" value="PurM-like_N_sf"/>
</dbReference>
<dbReference type="InterPro" id="IPR023061">
    <property type="entry name" value="SelD_I"/>
</dbReference>
<dbReference type="InterPro" id="IPR004536">
    <property type="entry name" value="SPS/SelD"/>
</dbReference>
<dbReference type="NCBIfam" id="NF002098">
    <property type="entry name" value="PRK00943.1"/>
    <property type="match status" value="1"/>
</dbReference>
<dbReference type="NCBIfam" id="TIGR00476">
    <property type="entry name" value="selD"/>
    <property type="match status" value="1"/>
</dbReference>
<dbReference type="PANTHER" id="PTHR10256:SF0">
    <property type="entry name" value="INACTIVE SELENIDE, WATER DIKINASE-LIKE PROTEIN-RELATED"/>
    <property type="match status" value="1"/>
</dbReference>
<dbReference type="PANTHER" id="PTHR10256">
    <property type="entry name" value="SELENIDE, WATER DIKINASE"/>
    <property type="match status" value="1"/>
</dbReference>
<dbReference type="Pfam" id="PF00586">
    <property type="entry name" value="AIRS"/>
    <property type="match status" value="1"/>
</dbReference>
<dbReference type="Pfam" id="PF02769">
    <property type="entry name" value="AIRS_C"/>
    <property type="match status" value="1"/>
</dbReference>
<dbReference type="PIRSF" id="PIRSF036407">
    <property type="entry name" value="Selenphspht_syn"/>
    <property type="match status" value="1"/>
</dbReference>
<dbReference type="SUPFAM" id="SSF56042">
    <property type="entry name" value="PurM C-terminal domain-like"/>
    <property type="match status" value="1"/>
</dbReference>
<dbReference type="SUPFAM" id="SSF55326">
    <property type="entry name" value="PurM N-terminal domain-like"/>
    <property type="match status" value="1"/>
</dbReference>
<accession>P16456</accession>
<accession>P78172</accession>
<comment type="function">
    <text evidence="2 4 5">Synthesizes selenophosphate from selenide and ATP.</text>
</comment>
<comment type="catalytic activity">
    <reaction evidence="2 4 5">
        <text>hydrogenselenide + ATP + H2O = selenophosphate + AMP + phosphate + 2 H(+)</text>
        <dbReference type="Rhea" id="RHEA:18737"/>
        <dbReference type="ChEBI" id="CHEBI:15377"/>
        <dbReference type="ChEBI" id="CHEBI:15378"/>
        <dbReference type="ChEBI" id="CHEBI:16144"/>
        <dbReference type="ChEBI" id="CHEBI:29317"/>
        <dbReference type="ChEBI" id="CHEBI:30616"/>
        <dbReference type="ChEBI" id="CHEBI:43474"/>
        <dbReference type="ChEBI" id="CHEBI:456215"/>
        <dbReference type="EC" id="2.7.9.3"/>
    </reaction>
</comment>
<comment type="cofactor">
    <cofactor evidence="2 4">
        <name>Mg(2+)</name>
        <dbReference type="ChEBI" id="CHEBI:18420"/>
    </cofactor>
    <text evidence="2 4">Binds 1 Mg(2+) ion per monomer.</text>
</comment>
<comment type="subunit">
    <text evidence="2 4">Homodimer.</text>
</comment>
<comment type="similarity">
    <text evidence="2 7">Belongs to the selenophosphate synthase 1 family. Class I subfamily.</text>
</comment>
<protein>
    <recommendedName>
        <fullName evidence="2">Selenide, water dikinase</fullName>
        <ecNumber evidence="2 4 5">2.7.9.3</ecNumber>
    </recommendedName>
    <alternativeName>
        <fullName evidence="2">Selenium donor protein</fullName>
    </alternativeName>
    <alternativeName>
        <fullName evidence="2">Selenophosphate synthase</fullName>
    </alternativeName>
</protein>
<reference key="1">
    <citation type="journal article" date="1990" name="Proc. Natl. Acad. Sci. U.S.A.">
        <title>In vitro synthesis of selenocysteinyl-tRNA(UCA) from seryl-tRNA(UCA): involvement and characterization of the selD gene product.</title>
        <authorList>
            <person name="Leinfelder W."/>
            <person name="Forchhammer K."/>
            <person name="Veprek B."/>
            <person name="Zehelein E."/>
            <person name="Boeck A."/>
        </authorList>
    </citation>
    <scope>NUCLEOTIDE SEQUENCE [GENOMIC DNA]</scope>
    <scope>FUNCTION</scope>
    <scope>CATALYTIC ACTIVITY</scope>
    <source>
        <strain>K12 / MC4100 / ATCC 35695 / DSM 6574</strain>
    </source>
</reference>
<reference key="2">
    <citation type="journal article" date="1996" name="DNA Res.">
        <title>A 570-kb DNA sequence of the Escherichia coli K-12 genome corresponding to the 28.0-40.1 min region on the linkage map.</title>
        <authorList>
            <person name="Aiba H."/>
            <person name="Baba T."/>
            <person name="Fujita K."/>
            <person name="Hayashi K."/>
            <person name="Inada T."/>
            <person name="Isono K."/>
            <person name="Itoh T."/>
            <person name="Kasai H."/>
            <person name="Kashimoto K."/>
            <person name="Kimura S."/>
            <person name="Kitakawa M."/>
            <person name="Kitagawa M."/>
            <person name="Makino K."/>
            <person name="Miki T."/>
            <person name="Mizobuchi K."/>
            <person name="Mori H."/>
            <person name="Mori T."/>
            <person name="Motomura K."/>
            <person name="Nakade S."/>
            <person name="Nakamura Y."/>
            <person name="Nashimoto H."/>
            <person name="Nishio Y."/>
            <person name="Oshima T."/>
            <person name="Saito N."/>
            <person name="Sampei G."/>
            <person name="Seki Y."/>
            <person name="Sivasundaram S."/>
            <person name="Tagami H."/>
            <person name="Takeda J."/>
            <person name="Takemoto K."/>
            <person name="Takeuchi Y."/>
            <person name="Wada C."/>
            <person name="Yamamoto Y."/>
            <person name="Horiuchi T."/>
        </authorList>
    </citation>
    <scope>NUCLEOTIDE SEQUENCE [LARGE SCALE GENOMIC DNA]</scope>
    <source>
        <strain>K12 / W3110 / ATCC 27325 / DSM 5911</strain>
    </source>
</reference>
<reference key="3">
    <citation type="journal article" date="1997" name="Science">
        <title>The complete genome sequence of Escherichia coli K-12.</title>
        <authorList>
            <person name="Blattner F.R."/>
            <person name="Plunkett G. III"/>
            <person name="Bloch C.A."/>
            <person name="Perna N.T."/>
            <person name="Burland V."/>
            <person name="Riley M."/>
            <person name="Collado-Vides J."/>
            <person name="Glasner J.D."/>
            <person name="Rode C.K."/>
            <person name="Mayhew G.F."/>
            <person name="Gregor J."/>
            <person name="Davis N.W."/>
            <person name="Kirkpatrick H.A."/>
            <person name="Goeden M.A."/>
            <person name="Rose D.J."/>
            <person name="Mau B."/>
            <person name="Shao Y."/>
        </authorList>
    </citation>
    <scope>NUCLEOTIDE SEQUENCE [LARGE SCALE GENOMIC DNA]</scope>
    <source>
        <strain>K12 / MG1655 / ATCC 47076</strain>
    </source>
</reference>
<reference key="4">
    <citation type="journal article" date="2006" name="Mol. Syst. Biol.">
        <title>Highly accurate genome sequences of Escherichia coli K-12 strains MG1655 and W3110.</title>
        <authorList>
            <person name="Hayashi K."/>
            <person name="Morooka N."/>
            <person name="Yamamoto Y."/>
            <person name="Fujita K."/>
            <person name="Isono K."/>
            <person name="Choi S."/>
            <person name="Ohtsubo E."/>
            <person name="Baba T."/>
            <person name="Wanner B.L."/>
            <person name="Mori H."/>
            <person name="Horiuchi T."/>
        </authorList>
    </citation>
    <scope>NUCLEOTIDE SEQUENCE [LARGE SCALE GENOMIC DNA]</scope>
    <source>
        <strain>K12 / W3110 / ATCC 27325 / DSM 5911</strain>
    </source>
</reference>
<reference key="5">
    <citation type="journal article" date="1989" name="J. Biol. Chem.">
        <title>Molecular cloning and DNA sequence analysis of Escherichia coli topB, the gene encoding topoisomerase III.</title>
        <authorList>
            <person name="Digate R.J."/>
            <person name="Marians K.J."/>
        </authorList>
    </citation>
    <scope>NUCLEOTIDE SEQUENCE [GENOMIC DNA] OF 236-347</scope>
    <source>
        <strain>HMS-83</strain>
    </source>
</reference>
<reference key="6">
    <citation type="journal article" date="1992" name="J. Biol. Chem.">
        <title>Escherichia coli mutant SELD enzymes. The cysteine 17 residue is essential for selenophosphate formation from ATP and selenide.</title>
        <authorList>
            <person name="Kim I.Y."/>
            <person name="Veres Z."/>
            <person name="Stadtman T.C."/>
        </authorList>
    </citation>
    <scope>MUTAGENESIS OF CYS-17 AND CYS-19</scope>
</reference>
<reference key="7">
    <citation type="journal article" date="1993" name="J. Biol. Chem.">
        <title>Biochemical analysis of Escherichia coli selenophosphate synthetase mutants. Lysine 20 is essential for catalytic activity and cysteine 17/19 for 8-azido-ATP derivatization.</title>
        <authorList>
            <person name="Kim I.Y."/>
            <person name="Veres Z."/>
            <person name="Stadtman T.C."/>
        </authorList>
    </citation>
    <scope>MUTAGENESIS OF HIS-13; GLY-18 AND LYS-20</scope>
</reference>
<reference key="8">
    <citation type="journal article" date="2012" name="J. Bacteriol.">
        <title>Structural insights into the catalytic mechanism of Escherichia coli selenophosphate synthetase.</title>
        <authorList>
            <person name="Noinaj N."/>
            <person name="Wattanasak R."/>
            <person name="Lee D.Y."/>
            <person name="Wally J.L."/>
            <person name="Piszczek G."/>
            <person name="Chock P.B."/>
            <person name="Stadtman T.C."/>
            <person name="Buchanan S.K."/>
        </authorList>
    </citation>
    <scope>X-RAY CRYSTALLOGRAPHY (2.25 ANGSTROMS) OF MUTANT SER-17 IN COMPLEX WITH MAGNESIUM</scope>
    <scope>FUNCTION</scope>
    <scope>CATALYTIC ACTIVITY</scope>
    <scope>SUBUNIT</scope>
    <scope>MUTAGENESIS OF ASP-51; ASP-68; ASN-87; ASP-91 AND ASP-227</scope>
</reference>
<feature type="chain" id="PRO_0000127620" description="Selenide, water dikinase">
    <location>
        <begin position="1"/>
        <end position="347"/>
    </location>
</feature>
<feature type="active site" evidence="2">
    <location>
        <position position="17"/>
    </location>
</feature>
<feature type="binding site" description="in other chain" evidence="1 2">
    <location>
        <position position="20"/>
    </location>
    <ligand>
        <name>ATP</name>
        <dbReference type="ChEBI" id="CHEBI:30616"/>
        <note>ligand shared between dimeric partners</note>
    </ligand>
</feature>
<feature type="binding site" description="in other chain" evidence="1 2">
    <location>
        <begin position="48"/>
        <end position="50"/>
    </location>
    <ligand>
        <name>ATP</name>
        <dbReference type="ChEBI" id="CHEBI:30616"/>
        <note>ligand shared between dimeric partners</note>
    </ligand>
</feature>
<feature type="binding site" evidence="2 4 8">
    <location>
        <position position="51"/>
    </location>
    <ligand>
        <name>Mg(2+)</name>
        <dbReference type="ChEBI" id="CHEBI:18420"/>
    </ligand>
</feature>
<feature type="binding site" description="in other chain" evidence="1 2">
    <location>
        <position position="68"/>
    </location>
    <ligand>
        <name>ATP</name>
        <dbReference type="ChEBI" id="CHEBI:30616"/>
        <note>ligand shared between dimeric partners</note>
    </ligand>
</feature>
<feature type="binding site" description="in other chain" evidence="1 2">
    <location>
        <position position="91"/>
    </location>
    <ligand>
        <name>ATP</name>
        <dbReference type="ChEBI" id="CHEBI:30616"/>
        <note>ligand shared between dimeric partners</note>
    </ligand>
</feature>
<feature type="binding site" evidence="2 4 8">
    <location>
        <position position="91"/>
    </location>
    <ligand>
        <name>Mg(2+)</name>
        <dbReference type="ChEBI" id="CHEBI:18420"/>
    </ligand>
</feature>
<feature type="binding site" evidence="1 2">
    <location>
        <begin position="139"/>
        <end position="141"/>
    </location>
    <ligand>
        <name>ATP</name>
        <dbReference type="ChEBI" id="CHEBI:30616"/>
        <note>ligand shared between dimeric partners</note>
    </ligand>
</feature>
<feature type="binding site" evidence="2 4 8">
    <location>
        <position position="227"/>
    </location>
    <ligand>
        <name>Mg(2+)</name>
        <dbReference type="ChEBI" id="CHEBI:18420"/>
    </ligand>
</feature>
<feature type="site" description="Important for catalytic activity" evidence="2 6">
    <location>
        <position position="20"/>
    </location>
</feature>
<feature type="mutagenesis site" description="No loss of activity." evidence="6">
    <original>H</original>
    <variation>N</variation>
    <location>
        <position position="13"/>
    </location>
</feature>
<feature type="mutagenesis site" description="Complete loss of activity." evidence="3 4">
    <original>C</original>
    <variation>S</variation>
    <location>
        <position position="17"/>
    </location>
</feature>
<feature type="mutagenesis site" description="Partial loss of activity." evidence="6">
    <original>G</original>
    <variation>V</variation>
    <location>
        <position position="18"/>
    </location>
</feature>
<feature type="mutagenesis site" description="No loss of activity." evidence="3">
    <original>C</original>
    <variation>S</variation>
    <location>
        <position position="19"/>
    </location>
</feature>
<feature type="mutagenesis site" description="Complete loss of activity." evidence="6">
    <original>K</original>
    <variation>Q</variation>
    <location>
        <position position="20"/>
    </location>
</feature>
<feature type="mutagenesis site" description="Marked loss of activity." evidence="6">
    <original>K</original>
    <variation>R</variation>
    <location>
        <position position="20"/>
    </location>
</feature>
<feature type="mutagenesis site" description="Complete loss of activity." evidence="4">
    <original>D</original>
    <variation>A</variation>
    <location>
        <position position="51"/>
    </location>
</feature>
<feature type="mutagenesis site" description="Complete loss of activity." evidence="4">
    <original>D</original>
    <variation>A</variation>
    <location>
        <position position="68"/>
    </location>
</feature>
<feature type="mutagenesis site" description="Complete loss of activity." evidence="4">
    <original>N</original>
    <variation>A</variation>
    <location>
        <position position="87"/>
    </location>
</feature>
<feature type="mutagenesis site" description="Complete loss of activity." evidence="4">
    <original>D</original>
    <variation>A</variation>
    <location>
        <position position="91"/>
    </location>
</feature>
<feature type="mutagenesis site" description="Complete loss of activity." evidence="4">
    <original>D</original>
    <variation>A</variation>
    <location>
        <position position="227"/>
    </location>
</feature>
<feature type="strand" evidence="9">
    <location>
        <begin position="22"/>
        <end position="27"/>
    </location>
</feature>
<feature type="strand" evidence="9">
    <location>
        <begin position="41"/>
        <end position="43"/>
    </location>
</feature>
<feature type="strand" evidence="9">
    <location>
        <begin position="51"/>
        <end position="56"/>
    </location>
</feature>
<feature type="strand" evidence="9">
    <location>
        <begin position="60"/>
        <end position="71"/>
    </location>
</feature>
<feature type="helix" evidence="9">
    <location>
        <begin position="77"/>
        <end position="94"/>
    </location>
</feature>
<feature type="strand" evidence="9">
    <location>
        <begin position="98"/>
        <end position="108"/>
    </location>
</feature>
<feature type="turn" evidence="9">
    <location>
        <begin position="110"/>
        <end position="112"/>
    </location>
</feature>
<feature type="helix" evidence="9">
    <location>
        <begin position="115"/>
        <end position="131"/>
    </location>
</feature>
<feature type="strand" evidence="9">
    <location>
        <begin position="136"/>
        <end position="143"/>
    </location>
</feature>
<feature type="strand" evidence="9">
    <location>
        <begin position="148"/>
        <end position="158"/>
    </location>
</feature>
<feature type="helix" evidence="9">
    <location>
        <begin position="159"/>
        <end position="161"/>
    </location>
</feature>
<feature type="strand" evidence="9">
    <location>
        <begin position="173"/>
        <end position="178"/>
    </location>
</feature>
<feature type="helix" evidence="9">
    <location>
        <begin position="182"/>
        <end position="190"/>
    </location>
</feature>
<feature type="helix" evidence="9">
    <location>
        <begin position="196"/>
        <end position="198"/>
    </location>
</feature>
<feature type="helix" evidence="9">
    <location>
        <begin position="201"/>
        <end position="207"/>
    </location>
</feature>
<feature type="helix" evidence="9">
    <location>
        <begin position="212"/>
        <end position="216"/>
    </location>
</feature>
<feature type="strand" evidence="9">
    <location>
        <begin position="222"/>
        <end position="227"/>
    </location>
</feature>
<feature type="helix" evidence="9">
    <location>
        <begin position="232"/>
        <end position="244"/>
    </location>
</feature>
<feature type="strand" evidence="9">
    <location>
        <begin position="246"/>
        <end position="251"/>
    </location>
</feature>
<feature type="turn" evidence="9">
    <location>
        <begin position="252"/>
        <end position="254"/>
    </location>
</feature>
<feature type="helix" evidence="9">
    <location>
        <begin position="261"/>
        <end position="265"/>
    </location>
</feature>
<feature type="helix" evidence="9">
    <location>
        <begin position="272"/>
        <end position="281"/>
    </location>
</feature>
<feature type="helix" evidence="9">
    <location>
        <begin position="282"/>
        <end position="284"/>
    </location>
</feature>
<feature type="helix" evidence="9">
    <location>
        <begin position="290"/>
        <end position="296"/>
    </location>
</feature>
<feature type="strand" evidence="9">
    <location>
        <begin position="305"/>
        <end position="309"/>
    </location>
</feature>
<feature type="helix" evidence="9">
    <location>
        <begin position="311"/>
        <end position="323"/>
    </location>
</feature>
<feature type="strand" evidence="9">
    <location>
        <begin position="332"/>
        <end position="336"/>
    </location>
</feature>
<feature type="strand" evidence="9">
    <location>
        <begin position="341"/>
        <end position="345"/>
    </location>
</feature>
<gene>
    <name evidence="2" type="primary">selD</name>
    <name type="synonym">fdhB</name>
    <name type="ordered locus">b1764</name>
    <name type="ordered locus">JW1753</name>
</gene>
<proteinExistence type="evidence at protein level"/>
<name>SELD_ECOLI</name>
<organism>
    <name type="scientific">Escherichia coli (strain K12)</name>
    <dbReference type="NCBI Taxonomy" id="83333"/>
    <lineage>
        <taxon>Bacteria</taxon>
        <taxon>Pseudomonadati</taxon>
        <taxon>Pseudomonadota</taxon>
        <taxon>Gammaproteobacteria</taxon>
        <taxon>Enterobacterales</taxon>
        <taxon>Enterobacteriaceae</taxon>
        <taxon>Escherichia</taxon>
    </lineage>
</organism>
<keyword id="KW-0002">3D-structure</keyword>
<keyword id="KW-0067">ATP-binding</keyword>
<keyword id="KW-0418">Kinase</keyword>
<keyword id="KW-0460">Magnesium</keyword>
<keyword id="KW-0479">Metal-binding</keyword>
<keyword id="KW-0547">Nucleotide-binding</keyword>
<keyword id="KW-1185">Reference proteome</keyword>
<keyword id="KW-0711">Selenium</keyword>
<keyword id="KW-0808">Transferase</keyword>
<sequence length="347" mass="36687">MSENSIRLTQYSHGAGCGCKISPKVLETILHSEQAKFVDPNLLVGNETRDDAAVYDLGNGTSVISTTDFFMPIVDNPFDFGRIAATNAISDIFAMGGKPIMAIAILGWPINKLSPEIAREVTEGGRYACRQAGIALAGGHSIDAPEPIFGLAVTGIVPTERVKKNSTAQAGCKLFLTKPLGIGVLTTAEKKSLLKPEHQGLATEVMCRMNIAGASFANIEGVKAMTDVTGFGLLGHLSEMCQGAGVQARVDYEAIPKLPGVEEYIKLGAVPGGTERNFASYGHLMGEMPREVRDLLCDPQTSGGLLLAVMPEAENEVKATAAEFGIELTAIGELVPARGGRAMVEIR</sequence>
<evidence type="ECO:0000250" key="1">
    <source>
        <dbReference type="UniProtKB" id="P49903"/>
    </source>
</evidence>
<evidence type="ECO:0000255" key="2">
    <source>
        <dbReference type="HAMAP-Rule" id="MF_00625"/>
    </source>
</evidence>
<evidence type="ECO:0000269" key="3">
    <source>
    </source>
</evidence>
<evidence type="ECO:0000269" key="4">
    <source>
    </source>
</evidence>
<evidence type="ECO:0000269" key="5">
    <source>
    </source>
</evidence>
<evidence type="ECO:0000269" key="6">
    <source>
    </source>
</evidence>
<evidence type="ECO:0000305" key="7"/>
<evidence type="ECO:0007744" key="8">
    <source>
        <dbReference type="PDB" id="3U0O"/>
    </source>
</evidence>
<evidence type="ECO:0007829" key="9">
    <source>
        <dbReference type="PDB" id="3U0O"/>
    </source>
</evidence>